<organism>
    <name type="scientific">Parvibaculum lavamentivorans (strain DS-1 / DSM 13023 / NCIMB 13966)</name>
    <dbReference type="NCBI Taxonomy" id="402881"/>
    <lineage>
        <taxon>Bacteria</taxon>
        <taxon>Pseudomonadati</taxon>
        <taxon>Pseudomonadota</taxon>
        <taxon>Alphaproteobacteria</taxon>
        <taxon>Hyphomicrobiales</taxon>
        <taxon>Parvibaculaceae</taxon>
        <taxon>Parvibaculum</taxon>
    </lineage>
</organism>
<protein>
    <recommendedName>
        <fullName evidence="1">Ribosome-binding factor A</fullName>
    </recommendedName>
</protein>
<name>RBFA_PARL1</name>
<gene>
    <name evidence="1" type="primary">rbfA</name>
    <name type="ordered locus">Plav_3629</name>
</gene>
<dbReference type="EMBL" id="CP000774">
    <property type="protein sequence ID" value="ABS65227.1"/>
    <property type="molecule type" value="Genomic_DNA"/>
</dbReference>
<dbReference type="RefSeq" id="WP_012112488.1">
    <property type="nucleotide sequence ID" value="NC_009719.1"/>
</dbReference>
<dbReference type="SMR" id="A7HZ94"/>
<dbReference type="STRING" id="402881.Plav_3629"/>
<dbReference type="KEGG" id="pla:Plav_3629"/>
<dbReference type="eggNOG" id="COG0858">
    <property type="taxonomic scope" value="Bacteria"/>
</dbReference>
<dbReference type="HOGENOM" id="CLU_089475_1_0_5"/>
<dbReference type="OrthoDB" id="9805051at2"/>
<dbReference type="Proteomes" id="UP000006377">
    <property type="component" value="Chromosome"/>
</dbReference>
<dbReference type="GO" id="GO:0005829">
    <property type="term" value="C:cytosol"/>
    <property type="evidence" value="ECO:0007669"/>
    <property type="project" value="TreeGrafter"/>
</dbReference>
<dbReference type="GO" id="GO:0043024">
    <property type="term" value="F:ribosomal small subunit binding"/>
    <property type="evidence" value="ECO:0007669"/>
    <property type="project" value="TreeGrafter"/>
</dbReference>
<dbReference type="GO" id="GO:0030490">
    <property type="term" value="P:maturation of SSU-rRNA"/>
    <property type="evidence" value="ECO:0007669"/>
    <property type="project" value="UniProtKB-UniRule"/>
</dbReference>
<dbReference type="Gene3D" id="3.30.300.20">
    <property type="match status" value="1"/>
</dbReference>
<dbReference type="HAMAP" id="MF_00003">
    <property type="entry name" value="RbfA"/>
    <property type="match status" value="1"/>
</dbReference>
<dbReference type="InterPro" id="IPR015946">
    <property type="entry name" value="KH_dom-like_a/b"/>
</dbReference>
<dbReference type="InterPro" id="IPR000238">
    <property type="entry name" value="RbfA"/>
</dbReference>
<dbReference type="InterPro" id="IPR023799">
    <property type="entry name" value="RbfA_dom_sf"/>
</dbReference>
<dbReference type="NCBIfam" id="NF001802">
    <property type="entry name" value="PRK00521.2-5"/>
    <property type="match status" value="1"/>
</dbReference>
<dbReference type="NCBIfam" id="TIGR00082">
    <property type="entry name" value="rbfA"/>
    <property type="match status" value="1"/>
</dbReference>
<dbReference type="PANTHER" id="PTHR33515">
    <property type="entry name" value="RIBOSOME-BINDING FACTOR A, CHLOROPLASTIC-RELATED"/>
    <property type="match status" value="1"/>
</dbReference>
<dbReference type="PANTHER" id="PTHR33515:SF1">
    <property type="entry name" value="RIBOSOME-BINDING FACTOR A, CHLOROPLASTIC-RELATED"/>
    <property type="match status" value="1"/>
</dbReference>
<dbReference type="Pfam" id="PF02033">
    <property type="entry name" value="RBFA"/>
    <property type="match status" value="1"/>
</dbReference>
<dbReference type="SUPFAM" id="SSF89919">
    <property type="entry name" value="Ribosome-binding factor A, RbfA"/>
    <property type="match status" value="1"/>
</dbReference>
<reference key="1">
    <citation type="journal article" date="2011" name="Stand. Genomic Sci.">
        <title>Complete genome sequence of Parvibaculum lavamentivorans type strain (DS-1(T)).</title>
        <authorList>
            <person name="Schleheck D."/>
            <person name="Weiss M."/>
            <person name="Pitluck S."/>
            <person name="Bruce D."/>
            <person name="Land M.L."/>
            <person name="Han S."/>
            <person name="Saunders E."/>
            <person name="Tapia R."/>
            <person name="Detter C."/>
            <person name="Brettin T."/>
            <person name="Han J."/>
            <person name="Woyke T."/>
            <person name="Goodwin L."/>
            <person name="Pennacchio L."/>
            <person name="Nolan M."/>
            <person name="Cook A.M."/>
            <person name="Kjelleberg S."/>
            <person name="Thomas T."/>
        </authorList>
    </citation>
    <scope>NUCLEOTIDE SEQUENCE [LARGE SCALE GENOMIC DNA]</scope>
    <source>
        <strain>DS-1 / DSM 13023 / NCIMB 13966</strain>
    </source>
</reference>
<proteinExistence type="inferred from homology"/>
<feature type="chain" id="PRO_0000321236" description="Ribosome-binding factor A">
    <location>
        <begin position="1"/>
        <end position="140"/>
    </location>
</feature>
<feature type="region of interest" description="Disordered" evidence="2">
    <location>
        <begin position="1"/>
        <end position="22"/>
    </location>
</feature>
<feature type="compositionally biased region" description="Basic residues" evidence="2">
    <location>
        <begin position="1"/>
        <end position="13"/>
    </location>
</feature>
<comment type="function">
    <text evidence="1">One of several proteins that assist in the late maturation steps of the functional core of the 30S ribosomal subunit. Associates with free 30S ribosomal subunits (but not with 30S subunits that are part of 70S ribosomes or polysomes). Required for efficient processing of 16S rRNA. May interact with the 5'-terminal helix region of 16S rRNA.</text>
</comment>
<comment type="subunit">
    <text evidence="1">Monomer. Binds 30S ribosomal subunits, but not 50S ribosomal subunits or 70S ribosomes.</text>
</comment>
<comment type="subcellular location">
    <subcellularLocation>
        <location evidence="1">Cytoplasm</location>
    </subcellularLocation>
</comment>
<comment type="similarity">
    <text evidence="1">Belongs to the RbfA family.</text>
</comment>
<accession>A7HZ94</accession>
<sequence>MQKKSSSKSHRATRGPSQRQLRAGELIRRALSDVVTRGTIQDPDLIERSFSVTEVRVSPDLRHATCFVAPLGKGDAAALAAALTRVRGYLRGQLSKEVTFKYMPDLTFEPDTSFDKAEQIDRLLHSPKVSQDLSPQDDEE</sequence>
<keyword id="KW-0963">Cytoplasm</keyword>
<keyword id="KW-1185">Reference proteome</keyword>
<keyword id="KW-0690">Ribosome biogenesis</keyword>
<evidence type="ECO:0000255" key="1">
    <source>
        <dbReference type="HAMAP-Rule" id="MF_00003"/>
    </source>
</evidence>
<evidence type="ECO:0000256" key="2">
    <source>
        <dbReference type="SAM" id="MobiDB-lite"/>
    </source>
</evidence>